<name>IF2B_THEGJ</name>
<sequence>MSESIDFYDFERLLDKAYEELPENVKSHKSRFEVPPAVVTIAGNRTIIENFVDIAEAMNRDPSHLLKFILREVATAGTLEGRRVILQGRFTPYLIANKLKKYLKEYVICPVCGSPDTKIIKRDRFYFLKCEACGAETPIQHL</sequence>
<gene>
    <name evidence="1" type="primary">eif2b</name>
    <name type="ordered locus">TGAM_2025</name>
</gene>
<feature type="chain" id="PRO_1000204383" description="Translation initiation factor 2 subunit beta">
    <location>
        <begin position="1"/>
        <end position="142"/>
    </location>
</feature>
<reference key="1">
    <citation type="journal article" date="2007" name="Genome Biol.">
        <title>Genome analysis and genome-wide proteomics of Thermococcus gammatolerans, the most radioresistant organism known amongst the Archaea.</title>
        <authorList>
            <person name="Zivanovic Y."/>
            <person name="Armengaud J."/>
            <person name="Lagorce A."/>
            <person name="Leplat C."/>
            <person name="Guerin P."/>
            <person name="Dutertre M."/>
            <person name="Anthouard V."/>
            <person name="Forterre P."/>
            <person name="Wincker P."/>
            <person name="Confalonieri F."/>
        </authorList>
    </citation>
    <scope>NUCLEOTIDE SEQUENCE [LARGE SCALE GENOMIC DNA]</scope>
    <source>
        <strain>DSM 15229 / JCM 11827 / EJ3</strain>
    </source>
</reference>
<proteinExistence type="inferred from homology"/>
<keyword id="KW-0396">Initiation factor</keyword>
<keyword id="KW-0648">Protein biosynthesis</keyword>
<keyword id="KW-1185">Reference proteome</keyword>
<protein>
    <recommendedName>
        <fullName evidence="1">Translation initiation factor 2 subunit beta</fullName>
    </recommendedName>
    <alternativeName>
        <fullName evidence="1">aIF2-beta</fullName>
    </alternativeName>
    <alternativeName>
        <fullName evidence="1">eIF-2-beta</fullName>
    </alternativeName>
</protein>
<organism>
    <name type="scientific">Thermococcus gammatolerans (strain DSM 15229 / JCM 11827 / EJ3)</name>
    <dbReference type="NCBI Taxonomy" id="593117"/>
    <lineage>
        <taxon>Archaea</taxon>
        <taxon>Methanobacteriati</taxon>
        <taxon>Methanobacteriota</taxon>
        <taxon>Thermococci</taxon>
        <taxon>Thermococcales</taxon>
        <taxon>Thermococcaceae</taxon>
        <taxon>Thermococcus</taxon>
    </lineage>
</organism>
<accession>C5A2A8</accession>
<comment type="function">
    <text evidence="1">eIF-2 functions in the early steps of protein synthesis by forming a ternary complex with GTP and initiator tRNA.</text>
</comment>
<comment type="subunit">
    <text evidence="1">Heterotrimer composed of an alpha, a beta and a gamma chain.</text>
</comment>
<comment type="similarity">
    <text evidence="1">Belongs to the eIF-2-beta/eIF-5 family.</text>
</comment>
<dbReference type="EMBL" id="CP001398">
    <property type="protein sequence ID" value="ACS34527.1"/>
    <property type="molecule type" value="Genomic_DNA"/>
</dbReference>
<dbReference type="RefSeq" id="WP_015859630.1">
    <property type="nucleotide sequence ID" value="NC_012804.1"/>
</dbReference>
<dbReference type="SMR" id="C5A2A8"/>
<dbReference type="STRING" id="593117.TGAM_2025"/>
<dbReference type="PaxDb" id="593117-TGAM_2025"/>
<dbReference type="GeneID" id="7987082"/>
<dbReference type="KEGG" id="tga:TGAM_2025"/>
<dbReference type="PATRIC" id="fig|593117.10.peg.2035"/>
<dbReference type="eggNOG" id="arCOG01640">
    <property type="taxonomic scope" value="Archaea"/>
</dbReference>
<dbReference type="HOGENOM" id="CLU_026663_3_1_2"/>
<dbReference type="OrthoDB" id="38099at2157"/>
<dbReference type="Proteomes" id="UP000001488">
    <property type="component" value="Chromosome"/>
</dbReference>
<dbReference type="GO" id="GO:0003743">
    <property type="term" value="F:translation initiation factor activity"/>
    <property type="evidence" value="ECO:0007669"/>
    <property type="project" value="UniProtKB-UniRule"/>
</dbReference>
<dbReference type="FunFam" id="3.30.30.170:FF:000001">
    <property type="entry name" value="Eukaryotic translation initiation factor 2 subunit"/>
    <property type="match status" value="1"/>
</dbReference>
<dbReference type="Gene3D" id="3.30.30.170">
    <property type="match status" value="1"/>
</dbReference>
<dbReference type="HAMAP" id="MF_00232">
    <property type="entry name" value="eIF_2_beta"/>
    <property type="match status" value="1"/>
</dbReference>
<dbReference type="InterPro" id="IPR045196">
    <property type="entry name" value="IF2/IF5"/>
</dbReference>
<dbReference type="InterPro" id="IPR004458">
    <property type="entry name" value="TIF2_bsu_arc"/>
</dbReference>
<dbReference type="InterPro" id="IPR002735">
    <property type="entry name" value="Transl_init_fac_IF2/IF5_dom"/>
</dbReference>
<dbReference type="InterPro" id="IPR016189">
    <property type="entry name" value="Transl_init_fac_IF2/IF5_N"/>
</dbReference>
<dbReference type="InterPro" id="IPR016190">
    <property type="entry name" value="Transl_init_fac_IF2/IF5_Zn-bd"/>
</dbReference>
<dbReference type="NCBIfam" id="TIGR00311">
    <property type="entry name" value="aIF-2beta"/>
    <property type="match status" value="1"/>
</dbReference>
<dbReference type="NCBIfam" id="NF003067">
    <property type="entry name" value="PRK03988.1"/>
    <property type="match status" value="1"/>
</dbReference>
<dbReference type="PANTHER" id="PTHR23001">
    <property type="entry name" value="EUKARYOTIC TRANSLATION INITIATION FACTOR"/>
    <property type="match status" value="1"/>
</dbReference>
<dbReference type="PANTHER" id="PTHR23001:SF3">
    <property type="entry name" value="EUKARYOTIC TRANSLATION INITIATION FACTOR 2 SUBUNIT 2"/>
    <property type="match status" value="1"/>
</dbReference>
<dbReference type="Pfam" id="PF01873">
    <property type="entry name" value="eIF-5_eIF-2B"/>
    <property type="match status" value="1"/>
</dbReference>
<dbReference type="SMART" id="SM00653">
    <property type="entry name" value="eIF2B_5"/>
    <property type="match status" value="1"/>
</dbReference>
<dbReference type="SUPFAM" id="SSF100966">
    <property type="entry name" value="Translation initiation factor 2 beta, aIF2beta, N-terminal domain"/>
    <property type="match status" value="1"/>
</dbReference>
<dbReference type="SUPFAM" id="SSF75689">
    <property type="entry name" value="Zinc-binding domain of translation initiation factor 2 beta"/>
    <property type="match status" value="1"/>
</dbReference>
<evidence type="ECO:0000255" key="1">
    <source>
        <dbReference type="HAMAP-Rule" id="MF_00232"/>
    </source>
</evidence>